<comment type="function">
    <text evidence="2">Part of the yfcOPQRSUV fimbrial operon. Could contribute to adhesion to various surfaces in specific environmental niches. Increases adhesion to eukaryotic T24 bladder epithelial cells in the absence of fim genes.</text>
</comment>
<comment type="induction">
    <text evidence="2">Expression is negatively regulated by H-NS and subjected to cAMP receptor protein (CRP)-mediated catabolite repression.</text>
</comment>
<comment type="disruption phenotype">
    <text evidence="2">Deletion of the operon under classical laboratory conditions does not result in any major effect on E.coli capacity to form biofilms compared with the wild-type strain.</text>
</comment>
<comment type="miscellaneous">
    <text evidence="4">The operon is cryptic under classical laboratory conditions, but is functional when constitutively expressed.</text>
</comment>
<comment type="similarity">
    <text evidence="3">Belongs to the fimbrial protein family.</text>
</comment>
<sequence>MSKFVKTAIAAAMVMGAFTSTATIAAGNNGTARFYGTIEDSVCSIVPDDHKLEVDMGDIGAEKLKNNGTTTPKNFQIRLQDCVFDTQETMTTTFTGTVSSANSGNYYTIFNTDTGAAFNNVSLAIGDSLGTSYKSGMGIDQKIVKDTATNKGKAKQTLNFKAWLVGAADAPDLGNFEANTTFQITYL</sequence>
<reference key="1">
    <citation type="journal article" date="1997" name="DNA Res.">
        <title>Construction of a contiguous 874-kb sequence of the Escherichia coli-K12 genome corresponding to 50.0-68.8 min on the linkage map and analysis of its sequence features.</title>
        <authorList>
            <person name="Yamamoto Y."/>
            <person name="Aiba H."/>
            <person name="Baba T."/>
            <person name="Hayashi K."/>
            <person name="Inada T."/>
            <person name="Isono K."/>
            <person name="Itoh T."/>
            <person name="Kimura S."/>
            <person name="Kitagawa M."/>
            <person name="Makino K."/>
            <person name="Miki T."/>
            <person name="Mitsuhashi N."/>
            <person name="Mizobuchi K."/>
            <person name="Mori H."/>
            <person name="Nakade S."/>
            <person name="Nakamura Y."/>
            <person name="Nashimoto H."/>
            <person name="Oshima T."/>
            <person name="Oyama S."/>
            <person name="Saito N."/>
            <person name="Sampei G."/>
            <person name="Satoh Y."/>
            <person name="Sivasundaram S."/>
            <person name="Tagami H."/>
            <person name="Takahashi H."/>
            <person name="Takeda J."/>
            <person name="Takemoto K."/>
            <person name="Uehara K."/>
            <person name="Wada C."/>
            <person name="Yamagata S."/>
            <person name="Horiuchi T."/>
        </authorList>
    </citation>
    <scope>NUCLEOTIDE SEQUENCE [LARGE SCALE GENOMIC DNA]</scope>
    <source>
        <strain>K12 / W3110 / ATCC 27325 / DSM 5911</strain>
    </source>
</reference>
<reference key="2">
    <citation type="journal article" date="1997" name="Science">
        <title>The complete genome sequence of Escherichia coli K-12.</title>
        <authorList>
            <person name="Blattner F.R."/>
            <person name="Plunkett G. III"/>
            <person name="Bloch C.A."/>
            <person name="Perna N.T."/>
            <person name="Burland V."/>
            <person name="Riley M."/>
            <person name="Collado-Vides J."/>
            <person name="Glasner J.D."/>
            <person name="Rode C.K."/>
            <person name="Mayhew G.F."/>
            <person name="Gregor J."/>
            <person name="Davis N.W."/>
            <person name="Kirkpatrick H.A."/>
            <person name="Goeden M.A."/>
            <person name="Rose D.J."/>
            <person name="Mau B."/>
            <person name="Shao Y."/>
        </authorList>
    </citation>
    <scope>NUCLEOTIDE SEQUENCE [LARGE SCALE GENOMIC DNA]</scope>
    <source>
        <strain>K12 / MG1655 / ATCC 47076</strain>
    </source>
</reference>
<reference key="3">
    <citation type="journal article" date="2006" name="Mol. Syst. Biol.">
        <title>Highly accurate genome sequences of Escherichia coli K-12 strains MG1655 and W3110.</title>
        <authorList>
            <person name="Hayashi K."/>
            <person name="Morooka N."/>
            <person name="Yamamoto Y."/>
            <person name="Fujita K."/>
            <person name="Isono K."/>
            <person name="Choi S."/>
            <person name="Ohtsubo E."/>
            <person name="Baba T."/>
            <person name="Wanner B.L."/>
            <person name="Mori H."/>
            <person name="Horiuchi T."/>
        </authorList>
    </citation>
    <scope>NUCLEOTIDE SEQUENCE [LARGE SCALE GENOMIC DNA]</scope>
    <source>
        <strain>K12 / W3110 / ATCC 27325 / DSM 5911</strain>
    </source>
</reference>
<reference key="4">
    <citation type="journal article" date="2010" name="Environ. Microbiol.">
        <title>Escherichia coli K-12 possesses multiple cryptic but functional chaperone-usher fimbriae with distinct surface specificities.</title>
        <authorList>
            <person name="Korea C.G."/>
            <person name="Badouraly R."/>
            <person name="Prevost M.C."/>
            <person name="Ghigo J.M."/>
            <person name="Beloin C."/>
        </authorList>
    </citation>
    <scope>FUNCTION</scope>
    <scope>INDUCTION</scope>
    <scope>DISRUPTION PHENOTYPE</scope>
    <source>
        <strain>K12 / MG1655 / ATCC 47076</strain>
    </source>
</reference>
<proteinExistence type="evidence at transcript level"/>
<organism>
    <name type="scientific">Escherichia coli (strain K12)</name>
    <dbReference type="NCBI Taxonomy" id="83333"/>
    <lineage>
        <taxon>Bacteria</taxon>
        <taxon>Pseudomonadati</taxon>
        <taxon>Pseudomonadota</taxon>
        <taxon>Gammaproteobacteria</taxon>
        <taxon>Enterobacterales</taxon>
        <taxon>Enterobacteriaceae</taxon>
        <taxon>Escherichia</taxon>
    </lineage>
</organism>
<keyword id="KW-1185">Reference proteome</keyword>
<keyword id="KW-0732">Signal</keyword>
<evidence type="ECO:0000255" key="1"/>
<evidence type="ECO:0000269" key="2">
    <source>
    </source>
</evidence>
<evidence type="ECO:0000305" key="3"/>
<evidence type="ECO:0000305" key="4">
    <source>
    </source>
</evidence>
<name>YFCV_ECOLI</name>
<protein>
    <recommendedName>
        <fullName>Uncharacterized fimbrial-like protein YfcV</fullName>
    </recommendedName>
</protein>
<feature type="signal peptide" evidence="1">
    <location>
        <begin position="1"/>
        <end position="25"/>
    </location>
</feature>
<feature type="chain" id="PRO_0000013774" description="Uncharacterized fimbrial-like protein YfcV">
    <location>
        <begin position="26"/>
        <end position="187"/>
    </location>
</feature>
<accession>P77288</accession>
<accession>P76940</accession>
<dbReference type="EMBL" id="U00096">
    <property type="protein sequence ID" value="AAC75399.1"/>
    <property type="molecule type" value="Genomic_DNA"/>
</dbReference>
<dbReference type="EMBL" id="AP009048">
    <property type="protein sequence ID" value="BAA16193.1"/>
    <property type="molecule type" value="Genomic_DNA"/>
</dbReference>
<dbReference type="PIR" id="A65007">
    <property type="entry name" value="A65007"/>
</dbReference>
<dbReference type="RefSeq" id="NP_416841.1">
    <property type="nucleotide sequence ID" value="NC_000913.3"/>
</dbReference>
<dbReference type="RefSeq" id="WP_000033316.1">
    <property type="nucleotide sequence ID" value="NZ_LN832404.1"/>
</dbReference>
<dbReference type="SMR" id="P77288"/>
<dbReference type="BioGRID" id="4263168">
    <property type="interactions" value="8"/>
</dbReference>
<dbReference type="FunCoup" id="P77288">
    <property type="interactions" value="142"/>
</dbReference>
<dbReference type="IntAct" id="P77288">
    <property type="interactions" value="1"/>
</dbReference>
<dbReference type="STRING" id="511145.b2339"/>
<dbReference type="PaxDb" id="511145-b2339"/>
<dbReference type="EnsemblBacteria" id="AAC75399">
    <property type="protein sequence ID" value="AAC75399"/>
    <property type="gene ID" value="b2339"/>
</dbReference>
<dbReference type="GeneID" id="949109"/>
<dbReference type="KEGG" id="ecj:JW2336"/>
<dbReference type="KEGG" id="eco:b2339"/>
<dbReference type="KEGG" id="ecoc:C3026_13020"/>
<dbReference type="PATRIC" id="fig|1411691.4.peg.4393"/>
<dbReference type="EchoBASE" id="EB3877"/>
<dbReference type="eggNOG" id="COG3539">
    <property type="taxonomic scope" value="Bacteria"/>
</dbReference>
<dbReference type="HOGENOM" id="CLU_088965_3_0_6"/>
<dbReference type="InParanoid" id="P77288"/>
<dbReference type="OMA" id="QDCNFNT"/>
<dbReference type="OrthoDB" id="6522787at2"/>
<dbReference type="PhylomeDB" id="P77288"/>
<dbReference type="BioCyc" id="EcoCyc:G7210-MONOMER"/>
<dbReference type="PRO" id="PR:P77288"/>
<dbReference type="Proteomes" id="UP000000625">
    <property type="component" value="Chromosome"/>
</dbReference>
<dbReference type="GO" id="GO:0009289">
    <property type="term" value="C:pilus"/>
    <property type="evidence" value="ECO:0000318"/>
    <property type="project" value="GO_Central"/>
</dbReference>
<dbReference type="GO" id="GO:0007155">
    <property type="term" value="P:cell adhesion"/>
    <property type="evidence" value="ECO:0000315"/>
    <property type="project" value="EcoCyc"/>
</dbReference>
<dbReference type="GO" id="GO:0043709">
    <property type="term" value="P:cell adhesion involved in single-species biofilm formation"/>
    <property type="evidence" value="ECO:0000318"/>
    <property type="project" value="GO_Central"/>
</dbReference>
<dbReference type="FunFam" id="2.60.40.1090:FF:000023">
    <property type="entry name" value="Fimbrial protein YfcV"/>
    <property type="match status" value="1"/>
</dbReference>
<dbReference type="Gene3D" id="2.60.40.1090">
    <property type="entry name" value="Fimbrial-type adhesion domain"/>
    <property type="match status" value="1"/>
</dbReference>
<dbReference type="InterPro" id="IPR000259">
    <property type="entry name" value="Adhesion_dom_fimbrial"/>
</dbReference>
<dbReference type="InterPro" id="IPR036937">
    <property type="entry name" value="Adhesion_dom_fimbrial_sf"/>
</dbReference>
<dbReference type="InterPro" id="IPR008966">
    <property type="entry name" value="Adhesion_dom_sf"/>
</dbReference>
<dbReference type="InterPro" id="IPR050263">
    <property type="entry name" value="Bact_Fimbrial_Adh_Pro"/>
</dbReference>
<dbReference type="PANTHER" id="PTHR33420:SF26">
    <property type="entry name" value="FIMBRIAL SUBUNIT"/>
    <property type="match status" value="1"/>
</dbReference>
<dbReference type="PANTHER" id="PTHR33420">
    <property type="entry name" value="FIMBRIAL SUBUNIT ELFA-RELATED"/>
    <property type="match status" value="1"/>
</dbReference>
<dbReference type="Pfam" id="PF00419">
    <property type="entry name" value="Fimbrial"/>
    <property type="match status" value="1"/>
</dbReference>
<dbReference type="SUPFAM" id="SSF49401">
    <property type="entry name" value="Bacterial adhesins"/>
    <property type="match status" value="1"/>
</dbReference>
<gene>
    <name type="primary">yfcV</name>
    <name type="ordered locus">b2339</name>
    <name type="ordered locus">JW2336</name>
</gene>